<keyword id="KW-0021">Allosteric enzyme</keyword>
<keyword id="KW-0328">Glycosyltransferase</keyword>
<keyword id="KW-0342">GTP-binding</keyword>
<keyword id="KW-0460">Magnesium</keyword>
<keyword id="KW-0547">Nucleotide-binding</keyword>
<keyword id="KW-0808">Transferase</keyword>
<organism>
    <name type="scientific">Legionella pneumophila (strain Lens)</name>
    <dbReference type="NCBI Taxonomy" id="297245"/>
    <lineage>
        <taxon>Bacteria</taxon>
        <taxon>Pseudomonadati</taxon>
        <taxon>Pseudomonadota</taxon>
        <taxon>Gammaproteobacteria</taxon>
        <taxon>Legionellales</taxon>
        <taxon>Legionellaceae</taxon>
        <taxon>Legionella</taxon>
    </lineage>
</organism>
<comment type="function">
    <text evidence="1">Catalyzes the conversion of uracil and 5-phospho-alpha-D-ribose 1-diphosphate (PRPP) to UMP and diphosphate.</text>
</comment>
<comment type="catalytic activity">
    <reaction evidence="1">
        <text>UMP + diphosphate = 5-phospho-alpha-D-ribose 1-diphosphate + uracil</text>
        <dbReference type="Rhea" id="RHEA:13017"/>
        <dbReference type="ChEBI" id="CHEBI:17568"/>
        <dbReference type="ChEBI" id="CHEBI:33019"/>
        <dbReference type="ChEBI" id="CHEBI:57865"/>
        <dbReference type="ChEBI" id="CHEBI:58017"/>
        <dbReference type="EC" id="2.4.2.9"/>
    </reaction>
</comment>
<comment type="cofactor">
    <cofactor evidence="1">
        <name>Mg(2+)</name>
        <dbReference type="ChEBI" id="CHEBI:18420"/>
    </cofactor>
    <text evidence="1">Binds 1 Mg(2+) ion per subunit. The magnesium is bound as Mg-PRPP.</text>
</comment>
<comment type="activity regulation">
    <text evidence="1">Allosterically activated by GTP.</text>
</comment>
<comment type="pathway">
    <text evidence="1">Pyrimidine metabolism; UMP biosynthesis via salvage pathway; UMP from uracil: step 1/1.</text>
</comment>
<comment type="similarity">
    <text evidence="1">Belongs to the UPRTase family.</text>
</comment>
<evidence type="ECO:0000255" key="1">
    <source>
        <dbReference type="HAMAP-Rule" id="MF_01218"/>
    </source>
</evidence>
<name>UPP_LEGPL</name>
<feature type="chain" id="PRO_0000120842" description="Uracil phosphoribosyltransferase">
    <location>
        <begin position="1"/>
        <end position="214"/>
    </location>
</feature>
<feature type="binding site" evidence="1">
    <location>
        <position position="81"/>
    </location>
    <ligand>
        <name>5-phospho-alpha-D-ribose 1-diphosphate</name>
        <dbReference type="ChEBI" id="CHEBI:58017"/>
    </ligand>
</feature>
<feature type="binding site" evidence="1">
    <location>
        <position position="106"/>
    </location>
    <ligand>
        <name>5-phospho-alpha-D-ribose 1-diphosphate</name>
        <dbReference type="ChEBI" id="CHEBI:58017"/>
    </ligand>
</feature>
<feature type="binding site" evidence="1">
    <location>
        <begin position="133"/>
        <end position="141"/>
    </location>
    <ligand>
        <name>5-phospho-alpha-D-ribose 1-diphosphate</name>
        <dbReference type="ChEBI" id="CHEBI:58017"/>
    </ligand>
</feature>
<feature type="binding site" evidence="1">
    <location>
        <position position="196"/>
    </location>
    <ligand>
        <name>uracil</name>
        <dbReference type="ChEBI" id="CHEBI:17568"/>
    </ligand>
</feature>
<feature type="binding site" evidence="1">
    <location>
        <begin position="201"/>
        <end position="203"/>
    </location>
    <ligand>
        <name>uracil</name>
        <dbReference type="ChEBI" id="CHEBI:17568"/>
    </ligand>
</feature>
<feature type="binding site" evidence="1">
    <location>
        <position position="202"/>
    </location>
    <ligand>
        <name>5-phospho-alpha-D-ribose 1-diphosphate</name>
        <dbReference type="ChEBI" id="CHEBI:58017"/>
    </ligand>
</feature>
<gene>
    <name evidence="1" type="primary">upp</name>
    <name type="ordered locus">lpl2168</name>
</gene>
<protein>
    <recommendedName>
        <fullName evidence="1">Uracil phosphoribosyltransferase</fullName>
        <ecNumber evidence="1">2.4.2.9</ecNumber>
    </recommendedName>
    <alternativeName>
        <fullName evidence="1">UMP pyrophosphorylase</fullName>
    </alternativeName>
    <alternativeName>
        <fullName evidence="1">UPRTase</fullName>
    </alternativeName>
</protein>
<proteinExistence type="inferred from homology"/>
<accession>Q5WUK0</accession>
<dbReference type="EC" id="2.4.2.9" evidence="1"/>
<dbReference type="EMBL" id="CR628337">
    <property type="protein sequence ID" value="CAH16408.1"/>
    <property type="molecule type" value="Genomic_DNA"/>
</dbReference>
<dbReference type="RefSeq" id="WP_011216146.1">
    <property type="nucleotide sequence ID" value="NC_006369.1"/>
</dbReference>
<dbReference type="SMR" id="Q5WUK0"/>
<dbReference type="KEGG" id="lpf:lpl2168"/>
<dbReference type="LegioList" id="lpl2168"/>
<dbReference type="HOGENOM" id="CLU_067096_2_2_6"/>
<dbReference type="UniPathway" id="UPA00574">
    <property type="reaction ID" value="UER00636"/>
</dbReference>
<dbReference type="Proteomes" id="UP000002517">
    <property type="component" value="Chromosome"/>
</dbReference>
<dbReference type="GO" id="GO:0005525">
    <property type="term" value="F:GTP binding"/>
    <property type="evidence" value="ECO:0007669"/>
    <property type="project" value="UniProtKB-KW"/>
</dbReference>
<dbReference type="GO" id="GO:0000287">
    <property type="term" value="F:magnesium ion binding"/>
    <property type="evidence" value="ECO:0007669"/>
    <property type="project" value="UniProtKB-UniRule"/>
</dbReference>
<dbReference type="GO" id="GO:0004845">
    <property type="term" value="F:uracil phosphoribosyltransferase activity"/>
    <property type="evidence" value="ECO:0007669"/>
    <property type="project" value="UniProtKB-UniRule"/>
</dbReference>
<dbReference type="GO" id="GO:0044206">
    <property type="term" value="P:UMP salvage"/>
    <property type="evidence" value="ECO:0007669"/>
    <property type="project" value="UniProtKB-UniRule"/>
</dbReference>
<dbReference type="GO" id="GO:0006223">
    <property type="term" value="P:uracil salvage"/>
    <property type="evidence" value="ECO:0007669"/>
    <property type="project" value="InterPro"/>
</dbReference>
<dbReference type="CDD" id="cd06223">
    <property type="entry name" value="PRTases_typeI"/>
    <property type="match status" value="1"/>
</dbReference>
<dbReference type="FunFam" id="3.40.50.2020:FF:000003">
    <property type="entry name" value="Uracil phosphoribosyltransferase"/>
    <property type="match status" value="1"/>
</dbReference>
<dbReference type="Gene3D" id="3.40.50.2020">
    <property type="match status" value="1"/>
</dbReference>
<dbReference type="HAMAP" id="MF_01218_B">
    <property type="entry name" value="Upp_B"/>
    <property type="match status" value="1"/>
</dbReference>
<dbReference type="InterPro" id="IPR000836">
    <property type="entry name" value="PRibTrfase_dom"/>
</dbReference>
<dbReference type="InterPro" id="IPR029057">
    <property type="entry name" value="PRTase-like"/>
</dbReference>
<dbReference type="InterPro" id="IPR034332">
    <property type="entry name" value="Upp_B"/>
</dbReference>
<dbReference type="InterPro" id="IPR050054">
    <property type="entry name" value="UPRTase/APRTase"/>
</dbReference>
<dbReference type="InterPro" id="IPR005765">
    <property type="entry name" value="Ura_phspho_trans"/>
</dbReference>
<dbReference type="NCBIfam" id="NF001097">
    <property type="entry name" value="PRK00129.1"/>
    <property type="match status" value="1"/>
</dbReference>
<dbReference type="NCBIfam" id="TIGR01091">
    <property type="entry name" value="upp"/>
    <property type="match status" value="1"/>
</dbReference>
<dbReference type="PANTHER" id="PTHR32315">
    <property type="entry name" value="ADENINE PHOSPHORIBOSYLTRANSFERASE"/>
    <property type="match status" value="1"/>
</dbReference>
<dbReference type="PANTHER" id="PTHR32315:SF4">
    <property type="entry name" value="URACIL PHOSPHORIBOSYLTRANSFERASE, CHLOROPLASTIC"/>
    <property type="match status" value="1"/>
</dbReference>
<dbReference type="Pfam" id="PF14681">
    <property type="entry name" value="UPRTase"/>
    <property type="match status" value="1"/>
</dbReference>
<dbReference type="SUPFAM" id="SSF53271">
    <property type="entry name" value="PRTase-like"/>
    <property type="match status" value="1"/>
</dbReference>
<sequence length="214" mass="23877">MDFNQVKVINHPLIQHKLTIMRKKETSTVKFRTLMHEVSMLLAYEVTRDLEIEYEEIETPLATMQSPVLKGKKLVFVSILRAGNGLLDGMLQLVPTARIGHIGLYRDPKTLEAVEYYFKLPEHTQDRDVIVVDPMLATGNSAIAAVKEVKALHPKSIKFLCLLAAPEGISNFHGEHPDVPIFTAAIDEQLNDHGYIVPGLGDAGDRLYGTKLAH</sequence>
<reference key="1">
    <citation type="journal article" date="2004" name="Nat. Genet.">
        <title>Evidence in the Legionella pneumophila genome for exploitation of host cell functions and high genome plasticity.</title>
        <authorList>
            <person name="Cazalet C."/>
            <person name="Rusniok C."/>
            <person name="Brueggemann H."/>
            <person name="Zidane N."/>
            <person name="Magnier A."/>
            <person name="Ma L."/>
            <person name="Tichit M."/>
            <person name="Jarraud S."/>
            <person name="Bouchier C."/>
            <person name="Vandenesch F."/>
            <person name="Kunst F."/>
            <person name="Etienne J."/>
            <person name="Glaser P."/>
            <person name="Buchrieser C."/>
        </authorList>
    </citation>
    <scope>NUCLEOTIDE SEQUENCE [LARGE SCALE GENOMIC DNA]</scope>
    <source>
        <strain>Lens</strain>
    </source>
</reference>